<reference key="1">
    <citation type="journal article" date="2009" name="Nature">
        <title>Evolution of pathogenicity and sexual reproduction in eight Candida genomes.</title>
        <authorList>
            <person name="Butler G."/>
            <person name="Rasmussen M.D."/>
            <person name="Lin M.F."/>
            <person name="Santos M.A.S."/>
            <person name="Sakthikumar S."/>
            <person name="Munro C.A."/>
            <person name="Rheinbay E."/>
            <person name="Grabherr M."/>
            <person name="Forche A."/>
            <person name="Reedy J.L."/>
            <person name="Agrafioti I."/>
            <person name="Arnaud M.B."/>
            <person name="Bates S."/>
            <person name="Brown A.J.P."/>
            <person name="Brunke S."/>
            <person name="Costanzo M.C."/>
            <person name="Fitzpatrick D.A."/>
            <person name="de Groot P.W.J."/>
            <person name="Harris D."/>
            <person name="Hoyer L.L."/>
            <person name="Hube B."/>
            <person name="Klis F.M."/>
            <person name="Kodira C."/>
            <person name="Lennard N."/>
            <person name="Logue M.E."/>
            <person name="Martin R."/>
            <person name="Neiman A.M."/>
            <person name="Nikolaou E."/>
            <person name="Quail M.A."/>
            <person name="Quinn J."/>
            <person name="Santos M.C."/>
            <person name="Schmitzberger F.F."/>
            <person name="Sherlock G."/>
            <person name="Shah P."/>
            <person name="Silverstein K.A.T."/>
            <person name="Skrzypek M.S."/>
            <person name="Soll D."/>
            <person name="Staggs R."/>
            <person name="Stansfield I."/>
            <person name="Stumpf M.P.H."/>
            <person name="Sudbery P.E."/>
            <person name="Srikantha T."/>
            <person name="Zeng Q."/>
            <person name="Berman J."/>
            <person name="Berriman M."/>
            <person name="Heitman J."/>
            <person name="Gow N.A.R."/>
            <person name="Lorenz M.C."/>
            <person name="Birren B.W."/>
            <person name="Kellis M."/>
            <person name="Cuomo C.A."/>
        </authorList>
    </citation>
    <scope>NUCLEOTIDE SEQUENCE [LARGE SCALE GENOMIC DNA]</scope>
    <source>
        <strain>ATCC 11503 / BCRC 21390 / CBS 2605 / JCM 1781 / NBRC 1676 / NRRL YB-4239</strain>
    </source>
</reference>
<sequence>MGSSSKSEKRKYDDGEELLERKKLKLQKKQEKKEKKDKKEKKDKKEKKDKKEKKDKKEKNKESKEAEARDDSGSNVQASSSSSTESTSYGYVQSSKVKDVPQSEVDKFLTDNEVTVEDPQHLHYRPILSFDQIKLQKDVSSKLTKFPKPTPIQSVSWPFLLDGKDVVGVAETGSGKTFAFGVPAINNIITSKNKDLSVLCISPTRELALQIYDNLEDLTRGTDVSCVAIYGGVSKDDQIKKIRNGANVVVATPGRLVDLINDGAVDLSSINYLVLDEADRMLEKGFEEDIKLIIGSTPAQGRQTLMFTATWPKEVRELANNFMNQPVKVTIGDRDELSANKRITQIVEVLDDKFQKEKKLINLLQKYQNTGNGDNKILVFALYKKEASRIESLLHRNKFKVAAIHGDLSQQQRTQALQSFKSGECNLLLATDVAARGLDIPNVKYVINLTFPLTIEDYVHRLGRTGRAGQTGIAHTFFTEDEKHLSGALCNILRGANQPVPEALLKYGGHTKKKTHSVYGAFYKDVDMPIDSKED</sequence>
<organism>
    <name type="scientific">Lodderomyces elongisporus (strain ATCC 11503 / CBS 2605 / JCM 1781 / NBRC 1676 / NRRL YB-4239)</name>
    <name type="common">Yeast</name>
    <name type="synonym">Saccharomyces elongisporus</name>
    <dbReference type="NCBI Taxonomy" id="379508"/>
    <lineage>
        <taxon>Eukaryota</taxon>
        <taxon>Fungi</taxon>
        <taxon>Dikarya</taxon>
        <taxon>Ascomycota</taxon>
        <taxon>Saccharomycotina</taxon>
        <taxon>Pichiomycetes</taxon>
        <taxon>Debaryomycetaceae</taxon>
        <taxon>Candida/Lodderomyces clade</taxon>
        <taxon>Lodderomyces</taxon>
    </lineage>
</organism>
<feature type="chain" id="PRO_0000294617" description="ATP-dependent RNA helicase DBP3">
    <location>
        <begin position="1"/>
        <end position="535"/>
    </location>
</feature>
<feature type="domain" description="Helicase ATP-binding" evidence="2">
    <location>
        <begin position="157"/>
        <end position="329"/>
    </location>
</feature>
<feature type="domain" description="Helicase C-terminal" evidence="3">
    <location>
        <begin position="362"/>
        <end position="508"/>
    </location>
</feature>
<feature type="region of interest" description="Disordered" evidence="4">
    <location>
        <begin position="1"/>
        <end position="96"/>
    </location>
</feature>
<feature type="short sequence motif" description="Q motif">
    <location>
        <begin position="128"/>
        <end position="154"/>
    </location>
</feature>
<feature type="short sequence motif" description="DEAD box">
    <location>
        <begin position="276"/>
        <end position="279"/>
    </location>
</feature>
<feature type="compositionally biased region" description="Basic and acidic residues" evidence="4">
    <location>
        <begin position="1"/>
        <end position="21"/>
    </location>
</feature>
<feature type="compositionally biased region" description="Basic residues" evidence="4">
    <location>
        <begin position="35"/>
        <end position="54"/>
    </location>
</feature>
<feature type="compositionally biased region" description="Basic and acidic residues" evidence="4">
    <location>
        <begin position="55"/>
        <end position="72"/>
    </location>
</feature>
<feature type="compositionally biased region" description="Low complexity" evidence="4">
    <location>
        <begin position="79"/>
        <end position="88"/>
    </location>
</feature>
<feature type="binding site" evidence="2">
    <location>
        <begin position="170"/>
        <end position="177"/>
    </location>
    <ligand>
        <name>ATP</name>
        <dbReference type="ChEBI" id="CHEBI:30616"/>
    </ligand>
</feature>
<dbReference type="EC" id="3.6.4.13"/>
<dbReference type="EMBL" id="CH981527">
    <property type="protein sequence ID" value="EDK45422.1"/>
    <property type="status" value="ALT_TERM"/>
    <property type="molecule type" value="Genomic_DNA"/>
</dbReference>
<dbReference type="RefSeq" id="XP_001525673.1">
    <property type="nucleotide sequence ID" value="XM_001525623.1"/>
</dbReference>
<dbReference type="SMR" id="A5E1W4"/>
<dbReference type="FunCoup" id="A5E1W4">
    <property type="interactions" value="403"/>
</dbReference>
<dbReference type="STRING" id="379508.A5E1W4"/>
<dbReference type="GeneID" id="5232733"/>
<dbReference type="KEGG" id="lel:PVL30_003087"/>
<dbReference type="eggNOG" id="KOG0331">
    <property type="taxonomic scope" value="Eukaryota"/>
</dbReference>
<dbReference type="HOGENOM" id="CLU_003041_1_5_1"/>
<dbReference type="InParanoid" id="A5E1W4"/>
<dbReference type="OrthoDB" id="196131at2759"/>
<dbReference type="Proteomes" id="UP000001996">
    <property type="component" value="Unassembled WGS sequence"/>
</dbReference>
<dbReference type="GO" id="GO:0005730">
    <property type="term" value="C:nucleolus"/>
    <property type="evidence" value="ECO:0007669"/>
    <property type="project" value="UniProtKB-SubCell"/>
</dbReference>
<dbReference type="GO" id="GO:0005524">
    <property type="term" value="F:ATP binding"/>
    <property type="evidence" value="ECO:0007669"/>
    <property type="project" value="UniProtKB-KW"/>
</dbReference>
<dbReference type="GO" id="GO:0016887">
    <property type="term" value="F:ATP hydrolysis activity"/>
    <property type="evidence" value="ECO:0007669"/>
    <property type="project" value="RHEA"/>
</dbReference>
<dbReference type="GO" id="GO:0003723">
    <property type="term" value="F:RNA binding"/>
    <property type="evidence" value="ECO:0007669"/>
    <property type="project" value="UniProtKB-KW"/>
</dbReference>
<dbReference type="GO" id="GO:0003724">
    <property type="term" value="F:RNA helicase activity"/>
    <property type="evidence" value="ECO:0007669"/>
    <property type="project" value="UniProtKB-EC"/>
</dbReference>
<dbReference type="GO" id="GO:0006364">
    <property type="term" value="P:rRNA processing"/>
    <property type="evidence" value="ECO:0007669"/>
    <property type="project" value="UniProtKB-KW"/>
</dbReference>
<dbReference type="CDD" id="cd00268">
    <property type="entry name" value="DEADc"/>
    <property type="match status" value="1"/>
</dbReference>
<dbReference type="CDD" id="cd18787">
    <property type="entry name" value="SF2_C_DEAD"/>
    <property type="match status" value="1"/>
</dbReference>
<dbReference type="FunFam" id="3.40.50.300:FF:000008">
    <property type="entry name" value="ATP-dependent RNA helicase RhlB"/>
    <property type="match status" value="1"/>
</dbReference>
<dbReference type="Gene3D" id="3.40.50.300">
    <property type="entry name" value="P-loop containing nucleotide triphosphate hydrolases"/>
    <property type="match status" value="2"/>
</dbReference>
<dbReference type="InterPro" id="IPR011545">
    <property type="entry name" value="DEAD/DEAH_box_helicase_dom"/>
</dbReference>
<dbReference type="InterPro" id="IPR014001">
    <property type="entry name" value="Helicase_ATP-bd"/>
</dbReference>
<dbReference type="InterPro" id="IPR001650">
    <property type="entry name" value="Helicase_C-like"/>
</dbReference>
<dbReference type="InterPro" id="IPR027417">
    <property type="entry name" value="P-loop_NTPase"/>
</dbReference>
<dbReference type="InterPro" id="IPR000629">
    <property type="entry name" value="RNA-helicase_DEAD-box_CS"/>
</dbReference>
<dbReference type="PANTHER" id="PTHR47958">
    <property type="entry name" value="ATP-DEPENDENT RNA HELICASE DBP3"/>
    <property type="match status" value="1"/>
</dbReference>
<dbReference type="Pfam" id="PF00270">
    <property type="entry name" value="DEAD"/>
    <property type="match status" value="1"/>
</dbReference>
<dbReference type="Pfam" id="PF00271">
    <property type="entry name" value="Helicase_C"/>
    <property type="match status" value="1"/>
</dbReference>
<dbReference type="SMART" id="SM00487">
    <property type="entry name" value="DEXDc"/>
    <property type="match status" value="1"/>
</dbReference>
<dbReference type="SMART" id="SM00490">
    <property type="entry name" value="HELICc"/>
    <property type="match status" value="1"/>
</dbReference>
<dbReference type="SUPFAM" id="SSF52540">
    <property type="entry name" value="P-loop containing nucleoside triphosphate hydrolases"/>
    <property type="match status" value="1"/>
</dbReference>
<dbReference type="PROSITE" id="PS00039">
    <property type="entry name" value="DEAD_ATP_HELICASE"/>
    <property type="match status" value="1"/>
</dbReference>
<dbReference type="PROSITE" id="PS51192">
    <property type="entry name" value="HELICASE_ATP_BIND_1"/>
    <property type="match status" value="1"/>
</dbReference>
<dbReference type="PROSITE" id="PS51194">
    <property type="entry name" value="HELICASE_CTER"/>
    <property type="match status" value="1"/>
</dbReference>
<dbReference type="PROSITE" id="PS51195">
    <property type="entry name" value="Q_MOTIF"/>
    <property type="match status" value="1"/>
</dbReference>
<accession>A5E1W4</accession>
<protein>
    <recommendedName>
        <fullName>ATP-dependent RNA helicase DBP3</fullName>
        <ecNumber>3.6.4.13</ecNumber>
    </recommendedName>
</protein>
<evidence type="ECO:0000250" key="1"/>
<evidence type="ECO:0000255" key="2">
    <source>
        <dbReference type="PROSITE-ProRule" id="PRU00541"/>
    </source>
</evidence>
<evidence type="ECO:0000255" key="3">
    <source>
        <dbReference type="PROSITE-ProRule" id="PRU00542"/>
    </source>
</evidence>
<evidence type="ECO:0000256" key="4">
    <source>
        <dbReference type="SAM" id="MobiDB-lite"/>
    </source>
</evidence>
<evidence type="ECO:0000305" key="5"/>
<name>DBP3_LODEL</name>
<comment type="function">
    <text evidence="1">ATP-dependent RNA helicase required for 60S ribosomal subunit synthesis. Involved in efficient pre-rRNA processing, predominantly at site A3, which is necessary for the normal formation of 25S and 5.8S rRNAs (By similarity).</text>
</comment>
<comment type="catalytic activity">
    <reaction>
        <text>ATP + H2O = ADP + phosphate + H(+)</text>
        <dbReference type="Rhea" id="RHEA:13065"/>
        <dbReference type="ChEBI" id="CHEBI:15377"/>
        <dbReference type="ChEBI" id="CHEBI:15378"/>
        <dbReference type="ChEBI" id="CHEBI:30616"/>
        <dbReference type="ChEBI" id="CHEBI:43474"/>
        <dbReference type="ChEBI" id="CHEBI:456216"/>
        <dbReference type="EC" id="3.6.4.13"/>
    </reaction>
</comment>
<comment type="subcellular location">
    <subcellularLocation>
        <location evidence="1">Nucleus</location>
        <location evidence="1">Nucleolus</location>
    </subcellularLocation>
</comment>
<comment type="domain">
    <text>The Q motif is unique to and characteristic of the DEAD box family of RNA helicases and controls ATP binding and hydrolysis.</text>
</comment>
<comment type="similarity">
    <text evidence="5">Belongs to the DEAD box helicase family. DDX5/DBP2 subfamily.</text>
</comment>
<comment type="sequence caution" evidence="5">
    <conflict type="erroneous termination">
        <sequence resource="EMBL-CDS" id="EDK45422"/>
    </conflict>
    <text>Truncated C-terminus.</text>
</comment>
<gene>
    <name type="primary">DBP3</name>
    <name type="ORF">LELG_03601</name>
</gene>
<proteinExistence type="inferred from homology"/>
<keyword id="KW-0067">ATP-binding</keyword>
<keyword id="KW-0347">Helicase</keyword>
<keyword id="KW-0378">Hydrolase</keyword>
<keyword id="KW-0547">Nucleotide-binding</keyword>
<keyword id="KW-0539">Nucleus</keyword>
<keyword id="KW-1185">Reference proteome</keyword>
<keyword id="KW-0690">Ribosome biogenesis</keyword>
<keyword id="KW-0694">RNA-binding</keyword>
<keyword id="KW-0698">rRNA processing</keyword>